<sequence length="185" mass="21092">MIIIVTGMPGSGKSKIVKEFEKRGVPSVSMGDVVREETAKRGLELTKENVAKVSIRLRQELGQNAVAKLAVEKVRELLRKNKVVVIDGVRSLDEVGTFRSAFPGEEIIIVAVHTPPHMRFERLKARGRHDDPQSWEDFEERDWKELKFGIGNVIAMADYMIVNDCPKEEYERRVQELVEKILAEH</sequence>
<reference key="1">
    <citation type="journal article" date="2008" name="J. Bacteriol.">
        <title>The complete genome sequence of Thermococcus onnurineus NA1 reveals a mixed heterotrophic and carboxydotrophic metabolism.</title>
        <authorList>
            <person name="Lee H.S."/>
            <person name="Kang S.G."/>
            <person name="Bae S.S."/>
            <person name="Lim J.K."/>
            <person name="Cho Y."/>
            <person name="Kim Y.J."/>
            <person name="Jeon J.H."/>
            <person name="Cha S.-S."/>
            <person name="Kwon K.K."/>
            <person name="Kim H.-T."/>
            <person name="Park C.-J."/>
            <person name="Lee H.-W."/>
            <person name="Kim S.I."/>
            <person name="Chun J."/>
            <person name="Colwell R.R."/>
            <person name="Kim S.-J."/>
            <person name="Lee J.-H."/>
        </authorList>
    </citation>
    <scope>NUCLEOTIDE SEQUENCE [LARGE SCALE GENOMIC DNA]</scope>
    <source>
        <strain>NA1</strain>
    </source>
</reference>
<protein>
    <recommendedName>
        <fullName evidence="1">UPF0200 protein TON_1344</fullName>
    </recommendedName>
</protein>
<feature type="chain" id="PRO_1000137120" description="UPF0200 protein TON_1344">
    <location>
        <begin position="1"/>
        <end position="185"/>
    </location>
</feature>
<feature type="binding site" evidence="1">
    <location>
        <begin position="7"/>
        <end position="14"/>
    </location>
    <ligand>
        <name>ATP</name>
        <dbReference type="ChEBI" id="CHEBI:30616"/>
    </ligand>
</feature>
<accession>B6YXM1</accession>
<dbReference type="EMBL" id="CP000855">
    <property type="protein sequence ID" value="ACJ16834.1"/>
    <property type="molecule type" value="Genomic_DNA"/>
</dbReference>
<dbReference type="RefSeq" id="WP_012572306.1">
    <property type="nucleotide sequence ID" value="NC_011529.1"/>
</dbReference>
<dbReference type="SMR" id="B6YXM1"/>
<dbReference type="STRING" id="523850.TON_1344"/>
<dbReference type="GeneID" id="7018372"/>
<dbReference type="KEGG" id="ton:TON_1344"/>
<dbReference type="PATRIC" id="fig|523850.10.peg.1352"/>
<dbReference type="eggNOG" id="arCOG01045">
    <property type="taxonomic scope" value="Archaea"/>
</dbReference>
<dbReference type="HOGENOM" id="CLU_096329_1_0_2"/>
<dbReference type="OrthoDB" id="85381at2157"/>
<dbReference type="Proteomes" id="UP000002727">
    <property type="component" value="Chromosome"/>
</dbReference>
<dbReference type="GO" id="GO:0005524">
    <property type="term" value="F:ATP binding"/>
    <property type="evidence" value="ECO:0007669"/>
    <property type="project" value="UniProtKB-UniRule"/>
</dbReference>
<dbReference type="Gene3D" id="3.40.50.300">
    <property type="entry name" value="P-loop containing nucleotide triphosphate hydrolases"/>
    <property type="match status" value="1"/>
</dbReference>
<dbReference type="HAMAP" id="MF_01111">
    <property type="entry name" value="UPF0200"/>
    <property type="match status" value="1"/>
</dbReference>
<dbReference type="InterPro" id="IPR022970">
    <property type="entry name" value="NTP_hydrolase-rel"/>
</dbReference>
<dbReference type="InterPro" id="IPR027417">
    <property type="entry name" value="P-loop_NTPase"/>
</dbReference>
<dbReference type="PANTHER" id="PTHR41930:SF1">
    <property type="entry name" value="DEPHOSPHO-COA KINASE"/>
    <property type="match status" value="1"/>
</dbReference>
<dbReference type="PANTHER" id="PTHR41930">
    <property type="entry name" value="UPF0200 PROTEIN MJ1399"/>
    <property type="match status" value="1"/>
</dbReference>
<dbReference type="Pfam" id="PF13207">
    <property type="entry name" value="AAA_17"/>
    <property type="match status" value="1"/>
</dbReference>
<dbReference type="SUPFAM" id="SSF52540">
    <property type="entry name" value="P-loop containing nucleoside triphosphate hydrolases"/>
    <property type="match status" value="1"/>
</dbReference>
<comment type="similarity">
    <text evidence="1">Belongs to the UPF0200 family.</text>
</comment>
<organism>
    <name type="scientific">Thermococcus onnurineus (strain NA1)</name>
    <dbReference type="NCBI Taxonomy" id="523850"/>
    <lineage>
        <taxon>Archaea</taxon>
        <taxon>Methanobacteriati</taxon>
        <taxon>Methanobacteriota</taxon>
        <taxon>Thermococci</taxon>
        <taxon>Thermococcales</taxon>
        <taxon>Thermococcaceae</taxon>
        <taxon>Thermococcus</taxon>
    </lineage>
</organism>
<evidence type="ECO:0000255" key="1">
    <source>
        <dbReference type="HAMAP-Rule" id="MF_01111"/>
    </source>
</evidence>
<keyword id="KW-0067">ATP-binding</keyword>
<keyword id="KW-0547">Nucleotide-binding</keyword>
<name>Y1344_THEON</name>
<gene>
    <name type="ordered locus">TON_1344</name>
</gene>
<proteinExistence type="inferred from homology"/>